<dbReference type="EC" id="2.7.4.24" evidence="4"/>
<dbReference type="EMBL" id="AB007893">
    <property type="protein sequence ID" value="BAA24863.2"/>
    <property type="status" value="ALT_INIT"/>
    <property type="molecule type" value="mRNA"/>
</dbReference>
<dbReference type="EMBL" id="AC011362">
    <property type="status" value="NOT_ANNOTATED_CDS"/>
    <property type="molecule type" value="Genomic_DNA"/>
</dbReference>
<dbReference type="EMBL" id="CH471086">
    <property type="protein sequence ID" value="EAW49076.1"/>
    <property type="status" value="ALT_SEQ"/>
    <property type="molecule type" value="Genomic_DNA"/>
</dbReference>
<dbReference type="EMBL" id="BC024591">
    <property type="protein sequence ID" value="AAH24591.1"/>
    <property type="molecule type" value="mRNA"/>
</dbReference>
<dbReference type="CCDS" id="CCDS34207.1">
    <molecule id="O43314-2"/>
</dbReference>
<dbReference type="CCDS" id="CCDS64212.1">
    <molecule id="O43314-1"/>
</dbReference>
<dbReference type="RefSeq" id="NP_001263206.1">
    <molecule id="O43314-1"/>
    <property type="nucleotide sequence ID" value="NM_001276277.3"/>
</dbReference>
<dbReference type="RefSeq" id="NP_001268400.1">
    <property type="nucleotide sequence ID" value="NM_001281471.2"/>
</dbReference>
<dbReference type="RefSeq" id="NP_056031.2">
    <molecule id="O43314-2"/>
    <property type="nucleotide sequence ID" value="NM_015216.4"/>
</dbReference>
<dbReference type="PDB" id="3T54">
    <property type="method" value="X-ray"/>
    <property type="resolution" value="1.90 A"/>
    <property type="chains" value="A=37-366"/>
</dbReference>
<dbReference type="PDB" id="3T7A">
    <property type="method" value="X-ray"/>
    <property type="resolution" value="1.70 A"/>
    <property type="chains" value="A=41-366"/>
</dbReference>
<dbReference type="PDB" id="3T99">
    <property type="method" value="X-ray"/>
    <property type="resolution" value="2.10 A"/>
    <property type="chains" value="A=37-366"/>
</dbReference>
<dbReference type="PDB" id="3T9A">
    <property type="method" value="X-ray"/>
    <property type="resolution" value="1.80 A"/>
    <property type="chains" value="A=41-366"/>
</dbReference>
<dbReference type="PDB" id="3T9B">
    <property type="method" value="X-ray"/>
    <property type="resolution" value="1.85 A"/>
    <property type="chains" value="A=41-366"/>
</dbReference>
<dbReference type="PDB" id="3T9C">
    <property type="method" value="X-ray"/>
    <property type="resolution" value="1.90 A"/>
    <property type="chains" value="A=41-366"/>
</dbReference>
<dbReference type="PDB" id="3T9D">
    <property type="method" value="X-ray"/>
    <property type="resolution" value="1.85 A"/>
    <property type="chains" value="A=41-366"/>
</dbReference>
<dbReference type="PDB" id="3T9E">
    <property type="method" value="X-ray"/>
    <property type="resolution" value="1.90 A"/>
    <property type="chains" value="A=41-366"/>
</dbReference>
<dbReference type="PDB" id="3T9F">
    <property type="method" value="X-ray"/>
    <property type="resolution" value="2.00 A"/>
    <property type="chains" value="A=41-366"/>
</dbReference>
<dbReference type="PDB" id="4HN2">
    <property type="method" value="X-ray"/>
    <property type="resolution" value="1.90 A"/>
    <property type="chains" value="A=41-366"/>
</dbReference>
<dbReference type="PDB" id="4NZM">
    <property type="method" value="X-ray"/>
    <property type="resolution" value="2.00 A"/>
    <property type="chains" value="A=41-366"/>
</dbReference>
<dbReference type="PDB" id="4NZN">
    <property type="method" value="X-ray"/>
    <property type="resolution" value="1.75 A"/>
    <property type="chains" value="A=41-366"/>
</dbReference>
<dbReference type="PDB" id="4NZO">
    <property type="method" value="X-ray"/>
    <property type="resolution" value="1.90 A"/>
    <property type="chains" value="A=41-366"/>
</dbReference>
<dbReference type="PDB" id="4Q4C">
    <property type="method" value="X-ray"/>
    <property type="resolution" value="1.90 A"/>
    <property type="chains" value="A=41-366"/>
</dbReference>
<dbReference type="PDB" id="4Q4D">
    <property type="method" value="X-ray"/>
    <property type="resolution" value="1.85 A"/>
    <property type="chains" value="A=41-366"/>
</dbReference>
<dbReference type="PDB" id="5BYA">
    <property type="method" value="X-ray"/>
    <property type="resolution" value="1.90 A"/>
    <property type="chains" value="A=41-366"/>
</dbReference>
<dbReference type="PDB" id="5BYB">
    <property type="method" value="X-ray"/>
    <property type="resolution" value="2.30 A"/>
    <property type="chains" value="A=41-366"/>
</dbReference>
<dbReference type="PDB" id="5DGH">
    <property type="method" value="X-ray"/>
    <property type="resolution" value="2.10 A"/>
    <property type="chains" value="A=41-366"/>
</dbReference>
<dbReference type="PDB" id="5DGI">
    <property type="method" value="X-ray"/>
    <property type="resolution" value="1.85 A"/>
    <property type="chains" value="A=41-366"/>
</dbReference>
<dbReference type="PDB" id="6N5C">
    <property type="method" value="X-ray"/>
    <property type="resolution" value="1.95 A"/>
    <property type="chains" value="A=41-366"/>
</dbReference>
<dbReference type="PDB" id="8G9E">
    <property type="method" value="X-ray"/>
    <property type="resolution" value="1.75 A"/>
    <property type="chains" value="A=41-366"/>
</dbReference>
<dbReference type="PDBsum" id="3T54"/>
<dbReference type="PDBsum" id="3T7A"/>
<dbReference type="PDBsum" id="3T99"/>
<dbReference type="PDBsum" id="3T9A"/>
<dbReference type="PDBsum" id="3T9B"/>
<dbReference type="PDBsum" id="3T9C"/>
<dbReference type="PDBsum" id="3T9D"/>
<dbReference type="PDBsum" id="3T9E"/>
<dbReference type="PDBsum" id="3T9F"/>
<dbReference type="PDBsum" id="4HN2"/>
<dbReference type="PDBsum" id="4NZM"/>
<dbReference type="PDBsum" id="4NZN"/>
<dbReference type="PDBsum" id="4NZO"/>
<dbReference type="PDBsum" id="4Q4C"/>
<dbReference type="PDBsum" id="4Q4D"/>
<dbReference type="PDBsum" id="5BYA"/>
<dbReference type="PDBsum" id="5BYB"/>
<dbReference type="PDBsum" id="5DGH"/>
<dbReference type="PDBsum" id="5DGI"/>
<dbReference type="PDBsum" id="6N5C"/>
<dbReference type="PDBsum" id="8G9E"/>
<dbReference type="SMR" id="O43314"/>
<dbReference type="BioGRID" id="116864">
    <property type="interactions" value="71"/>
</dbReference>
<dbReference type="FunCoup" id="O43314">
    <property type="interactions" value="2057"/>
</dbReference>
<dbReference type="IntAct" id="O43314">
    <property type="interactions" value="46"/>
</dbReference>
<dbReference type="STRING" id="9606.ENSP00000486357"/>
<dbReference type="ChEMBL" id="CHEMBL4523135"/>
<dbReference type="DEPOD" id="PPIP5K2"/>
<dbReference type="GlyGen" id="O43314">
    <property type="glycosylation" value="2 sites, 1 O-linked glycan (1 site)"/>
</dbReference>
<dbReference type="iPTMnet" id="O43314"/>
<dbReference type="PhosphoSitePlus" id="O43314"/>
<dbReference type="BioMuta" id="PPIP5K2"/>
<dbReference type="jPOST" id="O43314"/>
<dbReference type="MassIVE" id="O43314"/>
<dbReference type="PaxDb" id="9606-ENSP00000482907"/>
<dbReference type="PeptideAtlas" id="O43314"/>
<dbReference type="ProteomicsDB" id="48892">
    <molecule id="O43314-1"/>
</dbReference>
<dbReference type="ProteomicsDB" id="48893">
    <molecule id="O43314-2"/>
</dbReference>
<dbReference type="Pumba" id="O43314"/>
<dbReference type="Antibodypedia" id="44750">
    <property type="antibodies" value="74 antibodies from 20 providers"/>
</dbReference>
<dbReference type="DNASU" id="23262"/>
<dbReference type="Ensembl" id="ENST00000321521.13">
    <molecule id="O43314-2"/>
    <property type="protein sequence ID" value="ENSP00000313070.8"/>
    <property type="gene ID" value="ENSG00000145725.21"/>
</dbReference>
<dbReference type="Ensembl" id="ENST00000358359.8">
    <molecule id="O43314-1"/>
    <property type="protein sequence ID" value="ENSP00000351126.3"/>
    <property type="gene ID" value="ENSG00000145725.21"/>
</dbReference>
<dbReference type="Ensembl" id="ENST00000414217.5">
    <molecule id="O43314-2"/>
    <property type="protein sequence ID" value="ENSP00000416016.1"/>
    <property type="gene ID" value="ENSG00000145725.21"/>
</dbReference>
<dbReference type="GeneID" id="23262"/>
<dbReference type="KEGG" id="hsa:23262"/>
<dbReference type="MANE-Select" id="ENST00000358359.8">
    <property type="protein sequence ID" value="ENSP00000351126.3"/>
    <property type="RefSeq nucleotide sequence ID" value="NM_001276277.3"/>
    <property type="RefSeq protein sequence ID" value="NP_001263206.1"/>
</dbReference>
<dbReference type="UCSC" id="uc003kod.6">
    <molecule id="O43314-1"/>
    <property type="organism name" value="human"/>
</dbReference>
<dbReference type="AGR" id="HGNC:29035"/>
<dbReference type="CTD" id="23262"/>
<dbReference type="DisGeNET" id="23262"/>
<dbReference type="GeneCards" id="PPIP5K2"/>
<dbReference type="HGNC" id="HGNC:29035">
    <property type="gene designation" value="PPIP5K2"/>
</dbReference>
<dbReference type="HPA" id="ENSG00000145725">
    <property type="expression patterns" value="Low tissue specificity"/>
</dbReference>
<dbReference type="MalaCards" id="PPIP5K2"/>
<dbReference type="MIM" id="611648">
    <property type="type" value="gene"/>
</dbReference>
<dbReference type="MIM" id="618422">
    <property type="type" value="phenotype"/>
</dbReference>
<dbReference type="neXtProt" id="NX_O43314"/>
<dbReference type="OpenTargets" id="ENSG00000145725"/>
<dbReference type="Orphanet" id="90636">
    <property type="disease" value="Rare autosomal recessive non-syndromic sensorineural deafness type DFNB"/>
</dbReference>
<dbReference type="PharmGKB" id="PA165660454"/>
<dbReference type="VEuPathDB" id="HostDB:ENSG00000145725"/>
<dbReference type="eggNOG" id="KOG1057">
    <property type="taxonomic scope" value="Eukaryota"/>
</dbReference>
<dbReference type="GeneTree" id="ENSGT00390000009048"/>
<dbReference type="HOGENOM" id="CLU_000914_0_0_1"/>
<dbReference type="InParanoid" id="O43314"/>
<dbReference type="OrthoDB" id="18042at2759"/>
<dbReference type="PAN-GO" id="O43314">
    <property type="GO annotations" value="6 GO annotations based on evolutionary models"/>
</dbReference>
<dbReference type="PhylomeDB" id="O43314"/>
<dbReference type="TreeFam" id="TF313594"/>
<dbReference type="BRENDA" id="2.7.4.21">
    <property type="organism ID" value="2681"/>
</dbReference>
<dbReference type="BRENDA" id="2.7.4.24">
    <property type="organism ID" value="2681"/>
</dbReference>
<dbReference type="PathwayCommons" id="O43314"/>
<dbReference type="Reactome" id="R-HSA-1855167">
    <property type="pathway name" value="Synthesis of pyrophosphates in the cytosol"/>
</dbReference>
<dbReference type="SABIO-RK" id="O43314"/>
<dbReference type="SignaLink" id="O43314"/>
<dbReference type="BioGRID-ORCS" id="23262">
    <property type="hits" value="23 hits in 1146 CRISPR screens"/>
</dbReference>
<dbReference type="ChiTaRS" id="PPIP5K2">
    <property type="organism name" value="human"/>
</dbReference>
<dbReference type="EvolutionaryTrace" id="O43314"/>
<dbReference type="GenomeRNAi" id="23262"/>
<dbReference type="Pharos" id="O43314">
    <property type="development level" value="Tchem"/>
</dbReference>
<dbReference type="PRO" id="PR:O43314"/>
<dbReference type="Proteomes" id="UP000005640">
    <property type="component" value="Chromosome 5"/>
</dbReference>
<dbReference type="RNAct" id="O43314">
    <property type="molecule type" value="protein"/>
</dbReference>
<dbReference type="Bgee" id="ENSG00000145725">
    <property type="expression patterns" value="Expressed in adrenal tissue and 196 other cell types or tissues"/>
</dbReference>
<dbReference type="ExpressionAtlas" id="O43314">
    <property type="expression patterns" value="baseline and differential"/>
</dbReference>
<dbReference type="GO" id="GO:0005829">
    <property type="term" value="C:cytosol"/>
    <property type="evidence" value="ECO:0000314"/>
    <property type="project" value="MGI"/>
</dbReference>
<dbReference type="GO" id="GO:0033857">
    <property type="term" value="F:5-diphosphoinositol pentakisphosphate 1-kinase activity"/>
    <property type="evidence" value="ECO:0000314"/>
    <property type="project" value="MGI"/>
</dbReference>
<dbReference type="GO" id="GO:0005524">
    <property type="term" value="F:ATP binding"/>
    <property type="evidence" value="ECO:0000314"/>
    <property type="project" value="UniProtKB"/>
</dbReference>
<dbReference type="GO" id="GO:0000829">
    <property type="term" value="F:diphosphoinositol pentakisphosphate kinase activity"/>
    <property type="evidence" value="ECO:0000304"/>
    <property type="project" value="Reactome"/>
</dbReference>
<dbReference type="GO" id="GO:0052723">
    <property type="term" value="F:inositol hexakisphosphate 1-kinase activity"/>
    <property type="evidence" value="ECO:0007669"/>
    <property type="project" value="RHEA"/>
</dbReference>
<dbReference type="GO" id="GO:0000832">
    <property type="term" value="F:inositol hexakisphosphate 5-kinase activity"/>
    <property type="evidence" value="ECO:0000250"/>
    <property type="project" value="UniProtKB"/>
</dbReference>
<dbReference type="GO" id="GO:0000828">
    <property type="term" value="F:inositol hexakisphosphate kinase activity"/>
    <property type="evidence" value="ECO:0000314"/>
    <property type="project" value="MGI"/>
</dbReference>
<dbReference type="GO" id="GO:0000827">
    <property type="term" value="F:inositol-1,3,4,5,6-pentakisphosphate kinase activity"/>
    <property type="evidence" value="ECO:0000250"/>
    <property type="project" value="UniProtKB"/>
</dbReference>
<dbReference type="GO" id="GO:0006020">
    <property type="term" value="P:inositol metabolic process"/>
    <property type="evidence" value="ECO:0000250"/>
    <property type="project" value="UniProtKB"/>
</dbReference>
<dbReference type="GO" id="GO:0032958">
    <property type="term" value="P:inositol phosphate biosynthetic process"/>
    <property type="evidence" value="ECO:0000318"/>
    <property type="project" value="GO_Central"/>
</dbReference>
<dbReference type="GO" id="GO:0043647">
    <property type="term" value="P:inositol phosphate metabolic process"/>
    <property type="evidence" value="ECO:0000304"/>
    <property type="project" value="Reactome"/>
</dbReference>
<dbReference type="GO" id="GO:0007605">
    <property type="term" value="P:sensory perception of sound"/>
    <property type="evidence" value="ECO:0007669"/>
    <property type="project" value="UniProtKB-KW"/>
</dbReference>
<dbReference type="CDD" id="cd07061">
    <property type="entry name" value="HP_HAP_like"/>
    <property type="match status" value="1"/>
</dbReference>
<dbReference type="FunFam" id="3.30.470.20:FF:000003">
    <property type="entry name" value="Inositol hexakisphosphate and diphosphoinositol-pentakisphosphate kinase"/>
    <property type="match status" value="1"/>
</dbReference>
<dbReference type="FunFam" id="3.40.50.11950:FF:000001">
    <property type="entry name" value="Inositol hexakisphosphate and diphosphoinositol-pentakisphosphate kinase"/>
    <property type="match status" value="1"/>
</dbReference>
<dbReference type="FunFam" id="3.40.50.11950:FF:000003">
    <property type="entry name" value="Inositol hexakisphosphate and diphosphoinositol-pentakisphosphate kinase"/>
    <property type="match status" value="1"/>
</dbReference>
<dbReference type="Gene3D" id="3.40.50.11950">
    <property type="match status" value="1"/>
</dbReference>
<dbReference type="Gene3D" id="3.30.470.20">
    <property type="entry name" value="ATP-grasp fold, B domain"/>
    <property type="match status" value="1"/>
</dbReference>
<dbReference type="Gene3D" id="3.40.50.1240">
    <property type="entry name" value="Phosphoglycerate mutase-like"/>
    <property type="match status" value="1"/>
</dbReference>
<dbReference type="InterPro" id="IPR033379">
    <property type="entry name" value="Acid_Pase_AS"/>
</dbReference>
<dbReference type="InterPro" id="IPR000560">
    <property type="entry name" value="His_Pase_clade-2"/>
</dbReference>
<dbReference type="InterPro" id="IPR037446">
    <property type="entry name" value="His_Pase_VIP1"/>
</dbReference>
<dbReference type="InterPro" id="IPR029033">
    <property type="entry name" value="His_PPase_superfam"/>
</dbReference>
<dbReference type="InterPro" id="IPR040557">
    <property type="entry name" value="VIP1_N"/>
</dbReference>
<dbReference type="PANTHER" id="PTHR12750">
    <property type="entry name" value="DIPHOSPHOINOSITOL PENTAKISPHOSPHATE KINASE"/>
    <property type="match status" value="1"/>
</dbReference>
<dbReference type="PANTHER" id="PTHR12750:SF10">
    <property type="entry name" value="INOSITOL HEXAKISPHOSPHATE AND DIPHOSPHOINOSITOL-PENTAKISPHOSPHATE KINASE 2"/>
    <property type="match status" value="1"/>
</dbReference>
<dbReference type="Pfam" id="PF00328">
    <property type="entry name" value="His_Phos_2"/>
    <property type="match status" value="1"/>
</dbReference>
<dbReference type="Pfam" id="PF18086">
    <property type="entry name" value="PPIP5K2_N"/>
    <property type="match status" value="1"/>
</dbReference>
<dbReference type="SUPFAM" id="SSF56059">
    <property type="entry name" value="Glutathione synthetase ATP-binding domain-like"/>
    <property type="match status" value="1"/>
</dbReference>
<dbReference type="SUPFAM" id="SSF53254">
    <property type="entry name" value="Phosphoglycerate mutase-like"/>
    <property type="match status" value="1"/>
</dbReference>
<dbReference type="PROSITE" id="PS00616">
    <property type="entry name" value="HIS_ACID_PHOSPHAT_1"/>
    <property type="match status" value="1"/>
</dbReference>
<gene>
    <name evidence="8 12" type="primary">PPIP5K2</name>
    <name type="synonym">HISPPD1</name>
    <name type="synonym">KIAA0433</name>
    <name type="synonym">VIP2</name>
</gene>
<keyword id="KW-0002">3D-structure</keyword>
<keyword id="KW-0025">Alternative splicing</keyword>
<keyword id="KW-0067">ATP-binding</keyword>
<keyword id="KW-0963">Cytoplasm</keyword>
<keyword id="KW-0209">Deafness</keyword>
<keyword id="KW-0225">Disease variant</keyword>
<keyword id="KW-1009">Hearing</keyword>
<keyword id="KW-0418">Kinase</keyword>
<keyword id="KW-1010">Non-syndromic deafness</keyword>
<keyword id="KW-0547">Nucleotide-binding</keyword>
<keyword id="KW-0597">Phosphoprotein</keyword>
<keyword id="KW-1267">Proteomics identification</keyword>
<keyword id="KW-1185">Reference proteome</keyword>
<keyword id="KW-0808">Transferase</keyword>
<comment type="function">
    <text evidence="2 3 4 6">Bifunctional inositol kinase that acts in concert with the IP6K kinases IP6K1, IP6K2 and IP6K3 to synthesize the diphosphate group-containing inositol pyrophosphates diphosphoinositol pentakisphosphate, PP-InsP5, and bis-diphosphoinositol tetrakisphosphate, (PP)2-InsP4 (PubMed:17690096, PubMed:17702752, PubMed:21222653, PubMed:29590114). PP-InsP5 and (PP)2-InsP4, also respectively called InsP7 and InsP8, regulate a variety of cellular processes, including apoptosis, vesicle trafficking, cytoskeletal dynamics, exocytosis, insulin signaling and neutrophil activation (PubMed:17690096, PubMed:17702752, PubMed:21222653, PubMed:29590114). Phosphorylates inositol hexakisphosphate (InsP6) at position 1 to produce PP-InsP5 which is in turn phosphorylated by IP6Ks to produce (PP)2-InsP4 (PubMed:17690096, PubMed:17702752). Alternatively, phosphorylates PP-InsP5 at position 1, produced by IP6Ks from InsP6, to produce (PP)2-InsP4 (PubMed:17690096, PubMed:17702752). Required for normal hearing (PubMed:29590114).</text>
</comment>
<comment type="catalytic activity">
    <reaction evidence="4 6">
        <text>1D-myo-inositol hexakisphosphate + ATP = 1-diphospho-1D-myo-inositol 2,3,4,5,6-pentakisphosphate + ADP</text>
        <dbReference type="Rhea" id="RHEA:37459"/>
        <dbReference type="ChEBI" id="CHEBI:30616"/>
        <dbReference type="ChEBI" id="CHEBI:58130"/>
        <dbReference type="ChEBI" id="CHEBI:74946"/>
        <dbReference type="ChEBI" id="CHEBI:456216"/>
        <dbReference type="EC" id="2.7.4.24"/>
    </reaction>
    <physiologicalReaction direction="left-to-right" evidence="11">
        <dbReference type="Rhea" id="RHEA:37460"/>
    </physiologicalReaction>
</comment>
<comment type="catalytic activity">
    <reaction evidence="4 5 6">
        <text>5-diphospho-1D-myo-inositol 1,2,3,4,6-pentakisphosphate + ATP + H(+) = 1,5-bis(diphospho)-1D-myo-inositol 2,3,4,6-tetrakisphosphate + ADP</text>
        <dbReference type="Rhea" id="RHEA:10276"/>
        <dbReference type="ChEBI" id="CHEBI:15378"/>
        <dbReference type="ChEBI" id="CHEBI:30616"/>
        <dbReference type="ChEBI" id="CHEBI:58628"/>
        <dbReference type="ChEBI" id="CHEBI:77983"/>
        <dbReference type="ChEBI" id="CHEBI:456216"/>
        <dbReference type="EC" id="2.7.4.24"/>
    </reaction>
    <physiologicalReaction direction="left-to-right" evidence="5">
        <dbReference type="Rhea" id="RHEA:10277"/>
    </physiologicalReaction>
</comment>
<comment type="biophysicochemical properties">
    <kinetics>
        <KM evidence="2">0.13 uM for InsP6</KM>
        <KM evidence="2">0.19 uM for InsP7</KM>
        <Vmax evidence="2">0.39 nmol/min/mg enzyme with InsP6 as substrate</Vmax>
        <Vmax evidence="2">1.38 nmol/min/mg enzyme with InsP7 as substrate</Vmax>
    </kinetics>
</comment>
<comment type="interaction">
    <interactant intactId="EBI-3956987">
        <id>O43314</id>
    </interactant>
    <interactant intactId="EBI-356498">
        <id>P62258</id>
        <label>YWHAE</label>
    </interactant>
    <organismsDiffer>false</organismsDiffer>
    <experiments>2</experiments>
</comment>
<comment type="interaction">
    <interactant intactId="EBI-12906508">
        <id>O43314-2</id>
    </interactant>
    <interactant intactId="EBI-11526590">
        <id>P14859-6</id>
        <label>POU2F1</label>
    </interactant>
    <organismsDiffer>false</organismsDiffer>
    <experiments>3</experiments>
</comment>
<comment type="interaction">
    <interactant intactId="EBI-12906508">
        <id>O43314-2</id>
    </interactant>
    <interactant intactId="EBI-12029004">
        <id>P78424</id>
        <label>POU6F2</label>
    </interactant>
    <organismsDiffer>false</organismsDiffer>
    <experiments>3</experiments>
</comment>
<comment type="interaction">
    <interactant intactId="EBI-12906508">
        <id>O43314-2</id>
    </interactant>
    <interactant intactId="EBI-355653">
        <id>Q92922</id>
        <label>SMARCC1</label>
    </interactant>
    <organismsDiffer>false</organismsDiffer>
    <experiments>3</experiments>
</comment>
<comment type="subcellular location">
    <subcellularLocation>
        <location evidence="2">Cytoplasm</location>
        <location evidence="2">Cytosol</location>
    </subcellularLocation>
</comment>
<comment type="alternative products">
    <event type="alternative splicing"/>
    <isoform>
        <id>O43314-1</id>
        <name>1</name>
        <sequence type="displayed"/>
    </isoform>
    <isoform>
        <id>O43314-2</id>
        <name>2</name>
        <sequence type="described" ref="VSP_030636"/>
    </isoform>
</comment>
<comment type="domain">
    <text evidence="10">The C-terminal acid phosphatase-like domain binds PtdIns(3,4,5)P3 and InsP6. Despite its similarity with the phosphatase domain of histidine acid phosphatases, it has no phosphatase activity.</text>
</comment>
<comment type="disease" evidence="6">
    <disease id="DI-05551">
        <name>Deafness, autosomal recessive, 100</name>
        <acronym>DFNB100</acronym>
        <description>A form of non-syndromic, sensorineural deafness characterized by prelingual hearing impairment. Sensorineural deafness results from damage to the neural receptors of the inner ear, the nerve pathways to the brain, or the area of the brain that receives sound information.</description>
        <dbReference type="MIM" id="618422"/>
    </disease>
    <text>The disease is caused by variants affecting the gene represented in this entry.</text>
</comment>
<comment type="similarity">
    <text evidence="9">Belongs to the histidine acid phosphatase family. VIP1 subfamily.</text>
</comment>
<comment type="sequence caution" evidence="9">
    <conflict type="erroneous initiation">
        <sequence resource="EMBL-CDS" id="BAA24863"/>
    </conflict>
    <text>Extended N-terminus.</text>
</comment>
<comment type="sequence caution" evidence="9">
    <conflict type="erroneous gene model prediction">
        <sequence resource="EMBL-CDS" id="EAW49076"/>
    </conflict>
</comment>
<proteinExistence type="evidence at protein level"/>
<protein>
    <recommendedName>
        <fullName evidence="9">Inositol hexakisphosphate and diphosphoinositol-pentakisphosphate kinase 2</fullName>
        <ecNumber evidence="4">2.7.4.24</ecNumber>
    </recommendedName>
    <alternativeName>
        <fullName>Diphosphoinositol pentakisphosphate kinase 2</fullName>
    </alternativeName>
    <alternativeName>
        <fullName>Histidine acid phosphatase domain-containing protein 1</fullName>
    </alternativeName>
    <alternativeName>
        <fullName>InsP6 and PP-IP5 kinase 2</fullName>
    </alternativeName>
    <alternativeName>
        <fullName>VIP1 homolog 2</fullName>
        <shortName>hsVIP2</shortName>
    </alternativeName>
</protein>
<evidence type="ECO:0000256" key="1">
    <source>
        <dbReference type="SAM" id="MobiDB-lite"/>
    </source>
</evidence>
<evidence type="ECO:0000269" key="2">
    <source>
    </source>
</evidence>
<evidence type="ECO:0000269" key="3">
    <source>
    </source>
</evidence>
<evidence type="ECO:0000269" key="4">
    <source>
    </source>
</evidence>
<evidence type="ECO:0000269" key="5">
    <source>
    </source>
</evidence>
<evidence type="ECO:0000269" key="6">
    <source>
    </source>
</evidence>
<evidence type="ECO:0000303" key="7">
    <source>
    </source>
</evidence>
<evidence type="ECO:0000303" key="8">
    <source>
    </source>
</evidence>
<evidence type="ECO:0000305" key="9"/>
<evidence type="ECO:0000305" key="10">
    <source>
    </source>
</evidence>
<evidence type="ECO:0000305" key="11">
    <source>
    </source>
</evidence>
<evidence type="ECO:0000312" key="12">
    <source>
        <dbReference type="HGNC" id="HGNC:29035"/>
    </source>
</evidence>
<evidence type="ECO:0007744" key="13">
    <source>
        <dbReference type="PDB" id="3T54"/>
    </source>
</evidence>
<evidence type="ECO:0007744" key="14">
    <source>
        <dbReference type="PDB" id="3T7A"/>
    </source>
</evidence>
<evidence type="ECO:0007744" key="15">
    <source>
        <dbReference type="PDB" id="3T99"/>
    </source>
</evidence>
<evidence type="ECO:0007744" key="16">
    <source>
        <dbReference type="PDB" id="3T9A"/>
    </source>
</evidence>
<evidence type="ECO:0007744" key="17">
    <source>
        <dbReference type="PDB" id="3T9B"/>
    </source>
</evidence>
<evidence type="ECO:0007744" key="18">
    <source>
        <dbReference type="PDB" id="3T9C"/>
    </source>
</evidence>
<evidence type="ECO:0007744" key="19">
    <source>
        <dbReference type="PDB" id="3T9D"/>
    </source>
</evidence>
<evidence type="ECO:0007744" key="20">
    <source>
        <dbReference type="PDB" id="3T9E"/>
    </source>
</evidence>
<evidence type="ECO:0007744" key="21">
    <source>
        <dbReference type="PDB" id="3T9F"/>
    </source>
</evidence>
<evidence type="ECO:0007744" key="22">
    <source>
    </source>
</evidence>
<evidence type="ECO:0007744" key="23">
    <source>
    </source>
</evidence>
<evidence type="ECO:0007744" key="24">
    <source>
    </source>
</evidence>
<evidence type="ECO:0007744" key="25">
    <source>
    </source>
</evidence>
<evidence type="ECO:0007829" key="26">
    <source>
        <dbReference type="PDB" id="3T7A"/>
    </source>
</evidence>
<evidence type="ECO:0007829" key="27">
    <source>
        <dbReference type="PDB" id="3T9A"/>
    </source>
</evidence>
<evidence type="ECO:0007829" key="28">
    <source>
        <dbReference type="PDB" id="4NZN"/>
    </source>
</evidence>
<accession>O43314</accession>
<accession>A1NI53</accession>
<accession>A6NGS8</accession>
<accession>Q8TB50</accession>
<sequence length="1243" mass="140407">MSEAPRFFVGPEDTEINPGNYRHFFHHADEDDEEEDDSPPERQIVVGICSMAKKSKSKPMKEILERISLFKYITVVVFEEEVILNEPVENWPLCDCLISFHSKGFPLDKAVAYAKLRNPFVINDLNMQYLIQDRREVYSILQAEGILLPRYAILNRDPNNPKECNLIEGEDHVEVNGEVFQKPFVEKPVSAEDHNVYIYYPTSAGGGSQRLFRKIGSRSSVYSPESNVRKTGSYIYEEFMPTDGTDVKVYTVGPDYAHAEARKSPALDGKVERDSEGKEVRYPVILNAREKLIAWKVCLAFKQTVCGFDLLRANGQSYVCDVNGFSFVKNSMKYYDDCAKILGNIVMRELAPQFHIPWSIPLEAEDIPIVPTTSGTMMELRCVIAVIRHGDRTPKQKMKMEVRHQKFFDLFEKCDGYKSGKLKLKKPKQLQEVLDIARQLLMELGQNNDSEIEENKPKLEQLKTVLEMYGHFSGINRKVQLTYLPHGCPKTSSEEEDSRREEPSLLLVLKWGGELTPAGRVQAEELGRAFRCMYPGGQGDYAGFPGCGLLRLHSTYRHDLKIYASDEGRVQMTAAAFAKGLLALEGELTPILVQMVKSANMNGLLDSDSDSLSSCQQRVKARLHEILQKDRDFTAEDYEKLTPSGSISLIKSMHLIKNPVKTCDKVYSLIQSLTSQIRHRMEDPKSSDIQLYHSETLELMLRRWSKLEKDFKTKNGRYDISKIPDIYDCIKYDVQHNGSLKLENTMELYRLSKALADIVIPQEYGITKAEKLEIAKGYCTPLVRKIRSDLQRTQDDDTVNKLHPVYSRGVLSPERHVRTRLYFTSESHVHSLLSILRYGALCNESKDEQWKRAMDYLNVVNELNYMTQIVIMLYEDPNKDLSSEERFHVELHFSPGAKGCEEDKNLPSGYGYRPASRENEGRRPFKIDNDDEPHTSKRDEVDRAVILFKPMVSEPIHIHRKSPLPRSRKTATNDEESPLSVSSPEGTGTWLHYTSGVGTGRRRRRSGEQITSSPVSPKSLAFTSSIFGSWQQVVSENANYLRTPRTLVEQKQNPTVGSHCAGLFSTSVLGGSSSAPNLQDYARTHRKKLTSSGCIDDATRGSAVKRFSISFARHPTNGFELYSMVPSICPLETLHNALSLKQVDEFLASIASPSSDVPRKTAEISSTALRSSPIMRKKVSLNTYTPAKILPTPPATLKSTKASSKPATSGPSSAVVPNTSSRKKNITSKTETHEHKKNTGKKK</sequence>
<name>VIP2_HUMAN</name>
<feature type="chain" id="PRO_0000315692" description="Inositol hexakisphosphate and diphosphoinositol-pentakisphosphate kinase 2">
    <location>
        <begin position="1"/>
        <end position="1243"/>
    </location>
</feature>
<feature type="region of interest" description="Polyphosphoinositide-binding domain" evidence="4">
    <location>
        <begin position="371"/>
        <end position="442"/>
    </location>
</feature>
<feature type="region of interest" description="Disordered" evidence="1">
    <location>
        <begin position="898"/>
        <end position="941"/>
    </location>
</feature>
<feature type="region of interest" description="Disordered" evidence="1">
    <location>
        <begin position="957"/>
        <end position="1016"/>
    </location>
</feature>
<feature type="region of interest" description="Disordered" evidence="1">
    <location>
        <begin position="1185"/>
        <end position="1243"/>
    </location>
</feature>
<feature type="compositionally biased region" description="Basic and acidic residues" evidence="1">
    <location>
        <begin position="915"/>
        <end position="941"/>
    </location>
</feature>
<feature type="compositionally biased region" description="Basic residues" evidence="1">
    <location>
        <begin position="958"/>
        <end position="969"/>
    </location>
</feature>
<feature type="compositionally biased region" description="Low complexity" evidence="1">
    <location>
        <begin position="1195"/>
        <end position="1209"/>
    </location>
</feature>
<feature type="compositionally biased region" description="Polar residues" evidence="1">
    <location>
        <begin position="1210"/>
        <end position="1220"/>
    </location>
</feature>
<feature type="binding site" evidence="5 18 19 20 21">
    <location>
        <begin position="53"/>
        <end position="54"/>
    </location>
    <ligand>
        <name>substrate</name>
    </ligand>
</feature>
<feature type="binding site" evidence="5 13 14 15 16 17 18 19 20 21">
    <location>
        <position position="134"/>
    </location>
    <ligand>
        <name>ATP</name>
        <dbReference type="ChEBI" id="CHEBI:30616"/>
    </ligand>
</feature>
<feature type="binding site" evidence="5 13 14 15 16 17 18 19 20 21">
    <location>
        <position position="187"/>
    </location>
    <ligand>
        <name>ATP</name>
        <dbReference type="ChEBI" id="CHEBI:30616"/>
    </ligand>
</feature>
<feature type="binding site" evidence="5 13 14 15 16 17 18 19 20 21">
    <location>
        <position position="194"/>
    </location>
    <ligand>
        <name>ATP</name>
        <dbReference type="ChEBI" id="CHEBI:30616"/>
    </ligand>
</feature>
<feature type="binding site" evidence="5 18 19 20 21">
    <location>
        <begin position="213"/>
        <end position="214"/>
    </location>
    <ligand>
        <name>substrate</name>
    </ligand>
</feature>
<feature type="binding site" evidence="5 16 17 18 19">
    <location>
        <position position="213"/>
    </location>
    <ligand>
        <name>ATP</name>
        <dbReference type="ChEBI" id="CHEBI:30616"/>
    </ligand>
</feature>
<feature type="binding site" evidence="5 13 14 15 16 17 18 19 20 21">
    <location>
        <begin position="237"/>
        <end position="240"/>
    </location>
    <ligand>
        <name>ATP</name>
        <dbReference type="ChEBI" id="CHEBI:30616"/>
    </ligand>
</feature>
<feature type="binding site" evidence="5 13 16 17 18 19">
    <location>
        <begin position="246"/>
        <end position="248"/>
    </location>
    <ligand>
        <name>ATP</name>
        <dbReference type="ChEBI" id="CHEBI:30616"/>
    </ligand>
</feature>
<feature type="binding site" evidence="5 18 19 20 21">
    <location>
        <position position="248"/>
    </location>
    <ligand>
        <name>substrate</name>
    </ligand>
</feature>
<feature type="binding site" evidence="5 18 20 21">
    <location>
        <position position="262"/>
    </location>
    <ligand>
        <name>substrate</name>
    </ligand>
</feature>
<feature type="binding site" evidence="5 13 14">
    <location>
        <position position="264"/>
    </location>
    <ligand>
        <name>ATP</name>
        <dbReference type="ChEBI" id="CHEBI:30616"/>
    </ligand>
</feature>
<feature type="binding site" evidence="5 13 14 15 17 18 19 20 21">
    <location>
        <position position="309"/>
    </location>
    <ligand>
        <name>ATP</name>
        <dbReference type="ChEBI" id="CHEBI:30616"/>
    </ligand>
</feature>
<feature type="binding site" evidence="5 13">
    <location>
        <begin position="321"/>
        <end position="323"/>
    </location>
    <ligand>
        <name>ATP</name>
        <dbReference type="ChEBI" id="CHEBI:30616"/>
    </ligand>
</feature>
<feature type="binding site" evidence="5 19 20">
    <location>
        <begin position="326"/>
        <end position="329"/>
    </location>
    <ligand>
        <name>substrate</name>
    </ligand>
</feature>
<feature type="modified residue" description="Phosphoserine" evidence="23 24 25">
    <location>
        <position position="38"/>
    </location>
</feature>
<feature type="modified residue" description="Phosphoserine" evidence="24">
    <location>
        <position position="223"/>
    </location>
</feature>
<feature type="modified residue" description="Phosphoserine" evidence="22 24 25">
    <location>
        <position position="1006"/>
    </location>
</feature>
<feature type="modified residue" description="Phosphoserine" evidence="22 24">
    <location>
        <position position="1016"/>
    </location>
</feature>
<feature type="modified residue" description="Phosphoserine" evidence="24">
    <location>
        <position position="1074"/>
    </location>
</feature>
<feature type="modified residue" description="Phosphoserine" evidence="24 25">
    <location>
        <position position="1091"/>
    </location>
</feature>
<feature type="modified residue" description="Phosphoserine" evidence="24">
    <location>
        <position position="1165"/>
    </location>
</feature>
<feature type="modified residue" description="Phosphoserine" evidence="22 24">
    <location>
        <position position="1172"/>
    </location>
</feature>
<feature type="modified residue" description="Phosphoserine" evidence="24">
    <location>
        <position position="1180"/>
    </location>
</feature>
<feature type="modified residue" description="Phosphoserine" evidence="24">
    <location>
        <position position="1220"/>
    </location>
</feature>
<feature type="modified residue" description="Phosphoserine" evidence="24">
    <location>
        <position position="1221"/>
    </location>
</feature>
<feature type="splice variant" id="VSP_030636" description="In isoform 2." evidence="7">
    <location>
        <begin position="1097"/>
        <end position="1117"/>
    </location>
</feature>
<feature type="sequence variant" id="VAR_082201" description="In DFNB100; Impaired diphosphoinositol-pentakisphosphate kinase activity; dbSNP:rs548137246." evidence="6">
    <original>R</original>
    <variation>H</variation>
    <location>
        <position position="837"/>
    </location>
</feature>
<feature type="sequence variant" id="VAR_038276" description="In dbSNP:rs17155115.">
    <original>A</original>
    <variation>G</variation>
    <location>
        <position position="944"/>
    </location>
</feature>
<feature type="sequence variant" id="VAR_038277" description="In dbSNP:rs12519525.">
    <original>E</original>
    <variation>K</variation>
    <location>
        <position position="985"/>
    </location>
</feature>
<feature type="sequence variant" id="VAR_038278" description="In dbSNP:rs12520040.">
    <original>R</original>
    <variation>K</variation>
    <location>
        <position position="1003"/>
    </location>
</feature>
<feature type="sequence variant" id="VAR_038279" description="In dbSNP:rs17155138.">
    <original>P</original>
    <variation>Q</variation>
    <location>
        <position position="1206"/>
    </location>
</feature>
<feature type="sequence variant" id="VAR_038280" description="In dbSNP:rs17155147.">
    <original>T</original>
    <variation>M</variation>
    <location>
        <position position="1232"/>
    </location>
</feature>
<feature type="mutagenesis site" description="Reduces enzyme activity by about 99%." evidence="5">
    <original>R</original>
    <variation>A</variation>
    <variation>K</variation>
    <location>
        <position position="213"/>
    </location>
</feature>
<feature type="mutagenesis site" description="Loss of enzyme activity." evidence="5">
    <original>K</original>
    <variation>A</variation>
    <location>
        <position position="248"/>
    </location>
</feature>
<feature type="mutagenesis site" description="Reduces enzyme activity by about 99%." evidence="5">
    <original>R</original>
    <variation>A</variation>
    <location>
        <position position="262"/>
    </location>
</feature>
<feature type="strand" evidence="26">
    <location>
        <begin position="44"/>
        <end position="50"/>
    </location>
</feature>
<feature type="helix" evidence="26">
    <location>
        <begin position="52"/>
        <end position="55"/>
    </location>
</feature>
<feature type="helix" evidence="26">
    <location>
        <begin position="58"/>
        <end position="67"/>
    </location>
</feature>
<feature type="strand" evidence="26">
    <location>
        <begin position="73"/>
        <end position="77"/>
    </location>
</feature>
<feature type="helix" evidence="26">
    <location>
        <begin position="80"/>
        <end position="85"/>
    </location>
</feature>
<feature type="helix" evidence="26">
    <location>
        <begin position="88"/>
        <end position="90"/>
    </location>
</feature>
<feature type="strand" evidence="26">
    <location>
        <begin position="95"/>
        <end position="99"/>
    </location>
</feature>
<feature type="helix" evidence="26">
    <location>
        <begin position="107"/>
        <end position="117"/>
    </location>
</feature>
<feature type="strand" evidence="26">
    <location>
        <begin position="120"/>
        <end position="123"/>
    </location>
</feature>
<feature type="helix" evidence="26">
    <location>
        <begin position="127"/>
        <end position="131"/>
    </location>
</feature>
<feature type="helix" evidence="26">
    <location>
        <begin position="134"/>
        <end position="143"/>
    </location>
</feature>
<feature type="strand" evidence="26">
    <location>
        <begin position="151"/>
        <end position="154"/>
    </location>
</feature>
<feature type="strand" evidence="28">
    <location>
        <begin position="158"/>
        <end position="160"/>
    </location>
</feature>
<feature type="helix" evidence="26">
    <location>
        <begin position="161"/>
        <end position="163"/>
    </location>
</feature>
<feature type="strand" evidence="26">
    <location>
        <begin position="164"/>
        <end position="168"/>
    </location>
</feature>
<feature type="strand" evidence="26">
    <location>
        <begin position="170"/>
        <end position="175"/>
    </location>
</feature>
<feature type="strand" evidence="26">
    <location>
        <begin position="178"/>
        <end position="190"/>
    </location>
</feature>
<feature type="strand" evidence="26">
    <location>
        <begin position="197"/>
        <end position="199"/>
    </location>
</feature>
<feature type="helix" evidence="26">
    <location>
        <begin position="202"/>
        <end position="204"/>
    </location>
</feature>
<feature type="strand" evidence="26">
    <location>
        <begin position="208"/>
        <end position="215"/>
    </location>
</feature>
<feature type="strand" evidence="26">
    <location>
        <begin position="218"/>
        <end position="224"/>
    </location>
</feature>
<feature type="strand" evidence="26">
    <location>
        <begin position="230"/>
        <end position="232"/>
    </location>
</feature>
<feature type="strand" evidence="26">
    <location>
        <begin position="234"/>
        <end position="238"/>
    </location>
</feature>
<feature type="strand" evidence="26">
    <location>
        <begin position="243"/>
        <end position="253"/>
    </location>
</feature>
<feature type="strand" evidence="26">
    <location>
        <begin position="257"/>
        <end position="263"/>
    </location>
</feature>
<feature type="strand" evidence="27">
    <location>
        <begin position="265"/>
        <end position="267"/>
    </location>
</feature>
<feature type="strand" evidence="27">
    <location>
        <begin position="275"/>
        <end position="279"/>
    </location>
</feature>
<feature type="helix" evidence="26">
    <location>
        <begin position="288"/>
        <end position="300"/>
    </location>
</feature>
<feature type="strand" evidence="26">
    <location>
        <begin position="303"/>
        <end position="313"/>
    </location>
</feature>
<feature type="strand" evidence="26">
    <location>
        <begin position="316"/>
        <end position="325"/>
    </location>
</feature>
<feature type="helix" evidence="26">
    <location>
        <begin position="332"/>
        <end position="354"/>
    </location>
</feature>
<organism>
    <name type="scientific">Homo sapiens</name>
    <name type="common">Human</name>
    <dbReference type="NCBI Taxonomy" id="9606"/>
    <lineage>
        <taxon>Eukaryota</taxon>
        <taxon>Metazoa</taxon>
        <taxon>Chordata</taxon>
        <taxon>Craniata</taxon>
        <taxon>Vertebrata</taxon>
        <taxon>Euteleostomi</taxon>
        <taxon>Mammalia</taxon>
        <taxon>Eutheria</taxon>
        <taxon>Euarchontoglires</taxon>
        <taxon>Primates</taxon>
        <taxon>Haplorrhini</taxon>
        <taxon>Catarrhini</taxon>
        <taxon>Hominidae</taxon>
        <taxon>Homo</taxon>
    </lineage>
</organism>
<reference key="1">
    <citation type="journal article" date="1997" name="DNA Res.">
        <title>Prediction of the coding sequences of unidentified human genes. VIII. 78 new cDNA clones from brain which code for large proteins in vitro.</title>
        <authorList>
            <person name="Ishikawa K."/>
            <person name="Nagase T."/>
            <person name="Nakajima D."/>
            <person name="Seki N."/>
            <person name="Ohira M."/>
            <person name="Miyajima N."/>
            <person name="Tanaka A."/>
            <person name="Kotani H."/>
            <person name="Nomura N."/>
            <person name="Ohara O."/>
        </authorList>
    </citation>
    <scope>NUCLEOTIDE SEQUENCE [LARGE SCALE MRNA] (ISOFORM 1)</scope>
    <source>
        <tissue>Brain</tissue>
    </source>
</reference>
<reference key="2">
    <citation type="journal article" date="2002" name="DNA Res.">
        <title>Construction of expression-ready cDNA clones for KIAA genes: manual curation of 330 KIAA cDNA clones.</title>
        <authorList>
            <person name="Nakajima D."/>
            <person name="Okazaki N."/>
            <person name="Yamakawa H."/>
            <person name="Kikuno R."/>
            <person name="Ohara O."/>
            <person name="Nagase T."/>
        </authorList>
    </citation>
    <scope>SEQUENCE REVISION</scope>
</reference>
<reference key="3">
    <citation type="journal article" date="2004" name="Nature">
        <title>The DNA sequence and comparative analysis of human chromosome 5.</title>
        <authorList>
            <person name="Schmutz J."/>
            <person name="Martin J."/>
            <person name="Terry A."/>
            <person name="Couronne O."/>
            <person name="Grimwood J."/>
            <person name="Lowry S."/>
            <person name="Gordon L.A."/>
            <person name="Scott D."/>
            <person name="Xie G."/>
            <person name="Huang W."/>
            <person name="Hellsten U."/>
            <person name="Tran-Gyamfi M."/>
            <person name="She X."/>
            <person name="Prabhakar S."/>
            <person name="Aerts A."/>
            <person name="Altherr M."/>
            <person name="Bajorek E."/>
            <person name="Black S."/>
            <person name="Branscomb E."/>
            <person name="Caoile C."/>
            <person name="Challacombe J.F."/>
            <person name="Chan Y.M."/>
            <person name="Denys M."/>
            <person name="Detter J.C."/>
            <person name="Escobar J."/>
            <person name="Flowers D."/>
            <person name="Fotopulos D."/>
            <person name="Glavina T."/>
            <person name="Gomez M."/>
            <person name="Gonzales E."/>
            <person name="Goodstein D."/>
            <person name="Grigoriev I."/>
            <person name="Groza M."/>
            <person name="Hammon N."/>
            <person name="Hawkins T."/>
            <person name="Haydu L."/>
            <person name="Israni S."/>
            <person name="Jett J."/>
            <person name="Kadner K."/>
            <person name="Kimball H."/>
            <person name="Kobayashi A."/>
            <person name="Lopez F."/>
            <person name="Lou Y."/>
            <person name="Martinez D."/>
            <person name="Medina C."/>
            <person name="Morgan J."/>
            <person name="Nandkeshwar R."/>
            <person name="Noonan J.P."/>
            <person name="Pitluck S."/>
            <person name="Pollard M."/>
            <person name="Predki P."/>
            <person name="Priest J."/>
            <person name="Ramirez L."/>
            <person name="Retterer J."/>
            <person name="Rodriguez A."/>
            <person name="Rogers S."/>
            <person name="Salamov A."/>
            <person name="Salazar A."/>
            <person name="Thayer N."/>
            <person name="Tice H."/>
            <person name="Tsai M."/>
            <person name="Ustaszewska A."/>
            <person name="Vo N."/>
            <person name="Wheeler J."/>
            <person name="Wu K."/>
            <person name="Yang J."/>
            <person name="Dickson M."/>
            <person name="Cheng J.-F."/>
            <person name="Eichler E.E."/>
            <person name="Olsen A."/>
            <person name="Pennacchio L.A."/>
            <person name="Rokhsar D.S."/>
            <person name="Richardson P."/>
            <person name="Lucas S.M."/>
            <person name="Myers R.M."/>
            <person name="Rubin E.M."/>
        </authorList>
    </citation>
    <scope>NUCLEOTIDE SEQUENCE [LARGE SCALE GENOMIC DNA]</scope>
</reference>
<reference key="4">
    <citation type="submission" date="2005-09" db="EMBL/GenBank/DDBJ databases">
        <authorList>
            <person name="Mural R.J."/>
            <person name="Istrail S."/>
            <person name="Sutton G.G."/>
            <person name="Florea L."/>
            <person name="Halpern A.L."/>
            <person name="Mobarry C.M."/>
            <person name="Lippert R."/>
            <person name="Walenz B."/>
            <person name="Shatkay H."/>
            <person name="Dew I."/>
            <person name="Miller J.R."/>
            <person name="Flanigan M.J."/>
            <person name="Edwards N.J."/>
            <person name="Bolanos R."/>
            <person name="Fasulo D."/>
            <person name="Halldorsson B.V."/>
            <person name="Hannenhalli S."/>
            <person name="Turner R."/>
            <person name="Yooseph S."/>
            <person name="Lu F."/>
            <person name="Nusskern D.R."/>
            <person name="Shue B.C."/>
            <person name="Zheng X.H."/>
            <person name="Zhong F."/>
            <person name="Delcher A.L."/>
            <person name="Huson D.H."/>
            <person name="Kravitz S.A."/>
            <person name="Mouchard L."/>
            <person name="Reinert K."/>
            <person name="Remington K.A."/>
            <person name="Clark A.G."/>
            <person name="Waterman M.S."/>
            <person name="Eichler E.E."/>
            <person name="Adams M.D."/>
            <person name="Hunkapiller M.W."/>
            <person name="Myers E.W."/>
            <person name="Venter J.C."/>
        </authorList>
    </citation>
    <scope>NUCLEOTIDE SEQUENCE [LARGE SCALE GENOMIC DNA]</scope>
</reference>
<reference key="5">
    <citation type="journal article" date="2004" name="Genome Res.">
        <title>The status, quality, and expansion of the NIH full-length cDNA project: the Mammalian Gene Collection (MGC).</title>
        <authorList>
            <consortium name="The MGC Project Team"/>
        </authorList>
    </citation>
    <scope>NUCLEOTIDE SEQUENCE [LARGE SCALE MRNA] (ISOFORM 2)</scope>
    <source>
        <tissue>Uterus</tissue>
    </source>
</reference>
<reference key="6">
    <citation type="journal article" date="2007" name="J. Biol. Chem.">
        <title>Cloning and characterization of two human VIP1-like inositol hexakisphosphate and diphosphoinositol pentakisphosphate kinases.</title>
        <authorList>
            <person name="Fridy P.C."/>
            <person name="Otto J.C."/>
            <person name="Dollins D.E."/>
            <person name="York J.D."/>
        </authorList>
    </citation>
    <scope>FUNCTION</scope>
    <scope>ENZYME ACTIVITY</scope>
    <scope>BIOPHYSICOCHEMICAL PROPERTIES</scope>
    <scope>SUBCELLULAR LOCATION</scope>
</reference>
<reference key="7">
    <citation type="journal article" date="2007" name="J. Biol. Chem.">
        <title>Purification, sequencing, and molecular identification of a mammalian PP-InsP5 kinase that is activated when cells are exposed to hyperosmotic stress.</title>
        <authorList>
            <person name="Choi J.H."/>
            <person name="Williams J."/>
            <person name="Cho J."/>
            <person name="Falck J.R."/>
            <person name="Shears S.B."/>
        </authorList>
    </citation>
    <scope>FUNCTION</scope>
    <scope>ENZYME ACTIVITY</scope>
</reference>
<reference key="8">
    <citation type="journal article" date="2008" name="Proc. Natl. Acad. Sci. U.S.A.">
        <title>A quantitative atlas of mitotic phosphorylation.</title>
        <authorList>
            <person name="Dephoure N."/>
            <person name="Zhou C."/>
            <person name="Villen J."/>
            <person name="Beausoleil S.A."/>
            <person name="Bakalarski C.E."/>
            <person name="Elledge S.J."/>
            <person name="Gygi S.P."/>
        </authorList>
    </citation>
    <scope>PHOSPHORYLATION [LARGE SCALE ANALYSIS] AT SER-1006; SER-1016 AND SER-1172</scope>
    <scope>IDENTIFICATION BY MASS SPECTROMETRY [LARGE SCALE ANALYSIS]</scope>
    <source>
        <tissue>Cervix carcinoma</tissue>
    </source>
</reference>
<reference key="9">
    <citation type="journal article" date="2009" name="Sci. Signal.">
        <title>Quantitative phosphoproteomic analysis of T cell receptor signaling reveals system-wide modulation of protein-protein interactions.</title>
        <authorList>
            <person name="Mayya V."/>
            <person name="Lundgren D.H."/>
            <person name="Hwang S.-I."/>
            <person name="Rezaul K."/>
            <person name="Wu L."/>
            <person name="Eng J.K."/>
            <person name="Rodionov V."/>
            <person name="Han D.K."/>
        </authorList>
    </citation>
    <scope>PHOSPHORYLATION [LARGE SCALE ANALYSIS] AT SER-38</scope>
    <scope>IDENTIFICATION BY MASS SPECTROMETRY [LARGE SCALE ANALYSIS]</scope>
    <source>
        <tissue>Leukemic T-cell</tissue>
    </source>
</reference>
<reference key="10">
    <citation type="journal article" date="2011" name="BMC Syst. Biol.">
        <title>Initial characterization of the human central proteome.</title>
        <authorList>
            <person name="Burkard T.R."/>
            <person name="Planyavsky M."/>
            <person name="Kaupe I."/>
            <person name="Breitwieser F.P."/>
            <person name="Buerckstuemmer T."/>
            <person name="Bennett K.L."/>
            <person name="Superti-Furga G."/>
            <person name="Colinge J."/>
        </authorList>
    </citation>
    <scope>IDENTIFICATION BY MASS SPECTROMETRY [LARGE SCALE ANALYSIS]</scope>
</reference>
<reference key="11">
    <citation type="journal article" date="2011" name="Biochem. J.">
        <title>Receptor-dependent compartmentalization of PPIP5K1, a kinase with a cryptic polyphosphoinositide binding domain.</title>
        <authorList>
            <person name="Gokhale N.A."/>
            <person name="Zaremba A."/>
            <person name="Shears S.B."/>
        </authorList>
    </citation>
    <scope>FUNCTION</scope>
    <scope>CATALYTIC ACTIVITY</scope>
    <scope>POLYPHOSPHOINOSITIDE-BINDING DOMAIN</scope>
</reference>
<reference key="12">
    <citation type="journal article" date="2013" name="J. Proteome Res.">
        <title>Toward a comprehensive characterization of a human cancer cell phosphoproteome.</title>
        <authorList>
            <person name="Zhou H."/>
            <person name="Di Palma S."/>
            <person name="Preisinger C."/>
            <person name="Peng M."/>
            <person name="Polat A.N."/>
            <person name="Heck A.J."/>
            <person name="Mohammed S."/>
        </authorList>
    </citation>
    <scope>PHOSPHORYLATION [LARGE SCALE ANALYSIS] AT SER-38; SER-223; SER-1006; SER-1016; SER-1074; SER-1091; SER-1165; SER-1172; SER-1180; SER-1220 AND SER-1221</scope>
    <scope>IDENTIFICATION BY MASS SPECTROMETRY [LARGE SCALE ANALYSIS]</scope>
    <source>
        <tissue>Cervix carcinoma</tissue>
        <tissue>Erythroleukemia</tissue>
    </source>
</reference>
<reference key="13">
    <citation type="journal article" date="2014" name="J. Proteomics">
        <title>An enzyme assisted RP-RPLC approach for in-depth analysis of human liver phosphoproteome.</title>
        <authorList>
            <person name="Bian Y."/>
            <person name="Song C."/>
            <person name="Cheng K."/>
            <person name="Dong M."/>
            <person name="Wang F."/>
            <person name="Huang J."/>
            <person name="Sun D."/>
            <person name="Wang L."/>
            <person name="Ye M."/>
            <person name="Zou H."/>
        </authorList>
    </citation>
    <scope>PHOSPHORYLATION [LARGE SCALE ANALYSIS] AT SER-38; SER-1006 AND SER-1091</scope>
    <scope>IDENTIFICATION BY MASS SPECTROMETRY [LARGE SCALE ANALYSIS]</scope>
    <source>
        <tissue>Liver</tissue>
    </source>
</reference>
<reference key="14">
    <citation type="journal article" date="2018" name="PLoS Genet.">
        <title>Mutations in Diphosphoinositol-Pentakisphosphate Kinase PPIP5K2 are associated with hearing loss in human and mouse.</title>
        <authorList>
            <person name="Yousaf R."/>
            <person name="Gu C."/>
            <person name="Ahmed Z.M."/>
            <person name="Khan S.N."/>
            <person name="Friedman T.B."/>
            <person name="Riazuddin S."/>
            <person name="Shears S.B."/>
            <person name="Riazuddin S."/>
        </authorList>
    </citation>
    <scope>INVOLVEMENT IN DFNB100</scope>
    <scope>VARIANT DFNB100 HIS-837</scope>
    <scope>CHARACTERIZATION OF VARIANT DFNB100 HIS-837</scope>
    <scope>FUNCTION</scope>
    <scope>CATALYTIC ACTIVITY</scope>
</reference>
<reference evidence="13 14 15 16 17 18 19 20 21" key="15">
    <citation type="journal article" date="2012" name="Nat. Chem. Biol.">
        <title>Structural basis for an inositol pyrophosphate kinase surmounting phosphate crowding.</title>
        <authorList>
            <person name="Wang H."/>
            <person name="Falck J.R."/>
            <person name="Hall T.M."/>
            <person name="Shears S.B."/>
        </authorList>
    </citation>
    <scope>X-RAY CRYSTALLOGRAPHY (1.70 ANGSTROMS) OF 41-366 IN COMPLEXES WITH ATP; SUBSTRATE AND TRANSITION STATE ANALOG</scope>
    <scope>MUTAGENESIS OF ARG-213; LYS-248 AND ARG-262</scope>
    <scope>FUNCTION</scope>
    <scope>CATALYTIC ACTIVITY</scope>
</reference>